<organism>
    <name type="scientific">Amanita fuligineoides</name>
    <dbReference type="NCBI Taxonomy" id="580329"/>
    <lineage>
        <taxon>Eukaryota</taxon>
        <taxon>Fungi</taxon>
        <taxon>Dikarya</taxon>
        <taxon>Basidiomycota</taxon>
        <taxon>Agaricomycotina</taxon>
        <taxon>Agaricomycetes</taxon>
        <taxon>Agaricomycetidae</taxon>
        <taxon>Agaricales</taxon>
        <taxon>Pluteineae</taxon>
        <taxon>Amanitaceae</taxon>
        <taxon>Amanita</taxon>
    </lineage>
</organism>
<proteinExistence type="inferred from homology"/>
<reference key="1">
    <citation type="journal article" date="2014" name="Toxicon">
        <title>The molecular diversity of toxin gene families in lethal Amanita mushrooms.</title>
        <authorList>
            <person name="Li P."/>
            <person name="Deng W."/>
            <person name="Li T."/>
        </authorList>
    </citation>
    <scope>NUCLEOTIDE SEQUENCE [GENOMIC DNA]</scope>
    <scope>FUNCTION</scope>
</reference>
<accession>A0A023UCC1</accession>
<name>PHAT_AMAFL</name>
<dbReference type="EMBL" id="KF546298">
    <property type="protein sequence ID" value="AHX98322.1"/>
    <property type="molecule type" value="Genomic_DNA"/>
</dbReference>
<dbReference type="EMBL" id="KF546299">
    <property type="protein sequence ID" value="AHX98323.1"/>
    <property type="molecule type" value="Genomic_DNA"/>
</dbReference>
<dbReference type="GO" id="GO:0090729">
    <property type="term" value="F:toxin activity"/>
    <property type="evidence" value="ECO:0007669"/>
    <property type="project" value="UniProtKB-KW"/>
</dbReference>
<dbReference type="InterPro" id="IPR027582">
    <property type="entry name" value="Amanitin/phalloidin"/>
</dbReference>
<dbReference type="NCBIfam" id="TIGR04309">
    <property type="entry name" value="amanitin"/>
    <property type="match status" value="1"/>
</dbReference>
<sequence length="23" mass="2547">PAWLVDCPCVGDDVNFILTRGQK</sequence>
<keyword id="KW-0883">Thioether bond</keyword>
<keyword id="KW-0800">Toxin</keyword>
<feature type="propeptide" id="PRO_0000443617" evidence="2">
    <location>
        <position position="1"/>
    </location>
</feature>
<feature type="peptide" id="PRO_0000443618" description="Phallacidin" evidence="2">
    <location>
        <begin position="2"/>
        <end position="8"/>
    </location>
</feature>
<feature type="propeptide" id="PRO_0000443619" evidence="2">
    <location>
        <begin position="9"/>
        <end position="23"/>
    </location>
</feature>
<feature type="cross-link" description="Cyclopeptide (Ala-Pro)" evidence="2">
    <location>
        <begin position="2"/>
        <end position="8"/>
    </location>
</feature>
<feature type="cross-link" description="2'-cysteinyl-6'-hydroxytryptophan sulfoxide (Trp-Cys)" evidence="3">
    <location>
        <begin position="3"/>
        <end position="7"/>
    </location>
</feature>
<feature type="non-terminal residue" evidence="5">
    <location>
        <position position="1"/>
    </location>
</feature>
<comment type="function">
    <text evidence="6">Major toxin that belongs to the bicyclic heptapeptides called phallotoxins (PubMed:24613547). Although structurally related to amatoxins, phallotoxins have a different mode of action, which is the stabilization of F-actin (PubMed:24613547). Phallotoxins are poisonous when administered parenterally, but not orally because of poor absorption (PubMed:24613547).</text>
</comment>
<comment type="PTM">
    <text evidence="1">Processed by the macrocyclase-peptidase enzyme POPB to yield a toxic cyclic heptapeptide (By similarity). POPB first removes 10 residues from the N-terminus (By similarity). Conformational trapping of the remaining peptide forces the enzyme to release this intermediate rather than proceed to macrocyclization (By similarity). The enzyme rebinds the remaining peptide in a different conformation and catalyzes macrocyclization of the N-terminal 7 residues (By similarity).</text>
</comment>
<comment type="similarity">
    <text evidence="5">Belongs to the MSDIN fungal toxin family.</text>
</comment>
<protein>
    <recommendedName>
        <fullName evidence="4">Phallacidin proprotein</fullName>
    </recommendedName>
    <component>
        <recommendedName>
            <fullName evidence="4">Phallacidin</fullName>
        </recommendedName>
    </component>
</protein>
<evidence type="ECO:0000250" key="1">
    <source>
        <dbReference type="UniProtKB" id="A0A067SLB9"/>
    </source>
</evidence>
<evidence type="ECO:0000250" key="2">
    <source>
        <dbReference type="UniProtKB" id="A8W7M4"/>
    </source>
</evidence>
<evidence type="ECO:0000250" key="3">
    <source>
        <dbReference type="UniProtKB" id="P85421"/>
    </source>
</evidence>
<evidence type="ECO:0000303" key="4">
    <source>
    </source>
</evidence>
<evidence type="ECO:0000305" key="5"/>
<evidence type="ECO:0000305" key="6">
    <source>
    </source>
</evidence>